<evidence type="ECO:0000255" key="1">
    <source>
        <dbReference type="HAMAP-Rule" id="MF_00147"/>
    </source>
</evidence>
<keyword id="KW-0963">Cytoplasm</keyword>
<keyword id="KW-0312">Gluconeogenesis</keyword>
<keyword id="KW-0324">Glycolysis</keyword>
<keyword id="KW-0413">Isomerase</keyword>
<sequence length="260" mass="28059">MALRRPMVAGNWKMNGSAALAQELFKKFASKLQNDSAEVVLCPPSIYLESVRQLLEANKEALDGSLVRMGAQNLSQHDFGAYTGEVSGQMLKDCGCRYVIIGHSERRRMYGETSNIVAEKFAAAQKHGLTPILCVGESGPAREARRTFEVIAEELDIVIQKNGTMAFDNAIIAYEPLWAVGTGKSATPEQAQEVHAFIRKRLSEVSPFIGENIRILYGGSVTPSNAADLFAQPDVDGGLIGGASLNSSEFLSLCTIAMSA</sequence>
<reference key="1">
    <citation type="submission" date="2006-08" db="EMBL/GenBank/DDBJ databases">
        <title>Complete sequence of Shewanella sp. MR-4.</title>
        <authorList>
            <consortium name="US DOE Joint Genome Institute"/>
            <person name="Copeland A."/>
            <person name="Lucas S."/>
            <person name="Lapidus A."/>
            <person name="Barry K."/>
            <person name="Detter J.C."/>
            <person name="Glavina del Rio T."/>
            <person name="Hammon N."/>
            <person name="Israni S."/>
            <person name="Dalin E."/>
            <person name="Tice H."/>
            <person name="Pitluck S."/>
            <person name="Kiss H."/>
            <person name="Brettin T."/>
            <person name="Bruce D."/>
            <person name="Han C."/>
            <person name="Tapia R."/>
            <person name="Gilna P."/>
            <person name="Schmutz J."/>
            <person name="Larimer F."/>
            <person name="Land M."/>
            <person name="Hauser L."/>
            <person name="Kyrpides N."/>
            <person name="Mikhailova N."/>
            <person name="Nealson K."/>
            <person name="Konstantinidis K."/>
            <person name="Klappenbach J."/>
            <person name="Tiedje J."/>
            <person name="Richardson P."/>
        </authorList>
    </citation>
    <scope>NUCLEOTIDE SEQUENCE [LARGE SCALE GENOMIC DNA]</scope>
    <source>
        <strain>MR-4</strain>
    </source>
</reference>
<proteinExistence type="inferred from homology"/>
<name>TPIS_SHESM</name>
<gene>
    <name evidence="1" type="primary">tpiA</name>
    <name type="ordered locus">Shewmr4_1022</name>
</gene>
<accession>Q0HLG5</accession>
<feature type="chain" id="PRO_0000307557" description="Triosephosphate isomerase">
    <location>
        <begin position="1"/>
        <end position="260"/>
    </location>
</feature>
<feature type="active site" description="Electrophile" evidence="1">
    <location>
        <position position="103"/>
    </location>
</feature>
<feature type="active site" description="Proton acceptor" evidence="1">
    <location>
        <position position="175"/>
    </location>
</feature>
<feature type="binding site" evidence="1">
    <location>
        <begin position="11"/>
        <end position="13"/>
    </location>
    <ligand>
        <name>substrate</name>
    </ligand>
</feature>
<feature type="binding site" evidence="1">
    <location>
        <position position="181"/>
    </location>
    <ligand>
        <name>substrate</name>
    </ligand>
</feature>
<feature type="binding site" evidence="1">
    <location>
        <position position="220"/>
    </location>
    <ligand>
        <name>substrate</name>
    </ligand>
</feature>
<feature type="binding site" evidence="1">
    <location>
        <begin position="241"/>
        <end position="242"/>
    </location>
    <ligand>
        <name>substrate</name>
    </ligand>
</feature>
<comment type="function">
    <text evidence="1">Involved in the gluconeogenesis. Catalyzes stereospecifically the conversion of dihydroxyacetone phosphate (DHAP) to D-glyceraldehyde-3-phosphate (G3P).</text>
</comment>
<comment type="catalytic activity">
    <reaction evidence="1">
        <text>D-glyceraldehyde 3-phosphate = dihydroxyacetone phosphate</text>
        <dbReference type="Rhea" id="RHEA:18585"/>
        <dbReference type="ChEBI" id="CHEBI:57642"/>
        <dbReference type="ChEBI" id="CHEBI:59776"/>
        <dbReference type="EC" id="5.3.1.1"/>
    </reaction>
</comment>
<comment type="pathway">
    <text evidence="1">Carbohydrate biosynthesis; gluconeogenesis.</text>
</comment>
<comment type="pathway">
    <text evidence="1">Carbohydrate degradation; glycolysis; D-glyceraldehyde 3-phosphate from glycerone phosphate: step 1/1.</text>
</comment>
<comment type="subunit">
    <text evidence="1">Homodimer.</text>
</comment>
<comment type="subcellular location">
    <subcellularLocation>
        <location evidence="1">Cytoplasm</location>
    </subcellularLocation>
</comment>
<comment type="similarity">
    <text evidence="1">Belongs to the triosephosphate isomerase family.</text>
</comment>
<protein>
    <recommendedName>
        <fullName evidence="1">Triosephosphate isomerase</fullName>
        <shortName evidence="1">TIM</shortName>
        <shortName evidence="1">TPI</shortName>
        <ecNumber evidence="1">5.3.1.1</ecNumber>
    </recommendedName>
    <alternativeName>
        <fullName evidence="1">Triose-phosphate isomerase</fullName>
    </alternativeName>
</protein>
<dbReference type="EC" id="5.3.1.1" evidence="1"/>
<dbReference type="EMBL" id="CP000446">
    <property type="protein sequence ID" value="ABI38102.1"/>
    <property type="molecule type" value="Genomic_DNA"/>
</dbReference>
<dbReference type="RefSeq" id="WP_011621813.1">
    <property type="nucleotide sequence ID" value="NC_008321.1"/>
</dbReference>
<dbReference type="SMR" id="Q0HLG5"/>
<dbReference type="KEGG" id="she:Shewmr4_1022"/>
<dbReference type="HOGENOM" id="CLU_024251_2_1_6"/>
<dbReference type="UniPathway" id="UPA00109">
    <property type="reaction ID" value="UER00189"/>
</dbReference>
<dbReference type="UniPathway" id="UPA00138"/>
<dbReference type="GO" id="GO:0005829">
    <property type="term" value="C:cytosol"/>
    <property type="evidence" value="ECO:0007669"/>
    <property type="project" value="TreeGrafter"/>
</dbReference>
<dbReference type="GO" id="GO:0004807">
    <property type="term" value="F:triose-phosphate isomerase activity"/>
    <property type="evidence" value="ECO:0007669"/>
    <property type="project" value="UniProtKB-UniRule"/>
</dbReference>
<dbReference type="GO" id="GO:0006094">
    <property type="term" value="P:gluconeogenesis"/>
    <property type="evidence" value="ECO:0007669"/>
    <property type="project" value="UniProtKB-UniRule"/>
</dbReference>
<dbReference type="GO" id="GO:0046166">
    <property type="term" value="P:glyceraldehyde-3-phosphate biosynthetic process"/>
    <property type="evidence" value="ECO:0007669"/>
    <property type="project" value="TreeGrafter"/>
</dbReference>
<dbReference type="GO" id="GO:0019563">
    <property type="term" value="P:glycerol catabolic process"/>
    <property type="evidence" value="ECO:0007669"/>
    <property type="project" value="TreeGrafter"/>
</dbReference>
<dbReference type="GO" id="GO:0006096">
    <property type="term" value="P:glycolytic process"/>
    <property type="evidence" value="ECO:0007669"/>
    <property type="project" value="UniProtKB-UniRule"/>
</dbReference>
<dbReference type="CDD" id="cd00311">
    <property type="entry name" value="TIM"/>
    <property type="match status" value="1"/>
</dbReference>
<dbReference type="FunFam" id="3.20.20.70:FF:000016">
    <property type="entry name" value="Triosephosphate isomerase"/>
    <property type="match status" value="1"/>
</dbReference>
<dbReference type="Gene3D" id="3.20.20.70">
    <property type="entry name" value="Aldolase class I"/>
    <property type="match status" value="1"/>
</dbReference>
<dbReference type="HAMAP" id="MF_00147_B">
    <property type="entry name" value="TIM_B"/>
    <property type="match status" value="1"/>
</dbReference>
<dbReference type="InterPro" id="IPR013785">
    <property type="entry name" value="Aldolase_TIM"/>
</dbReference>
<dbReference type="InterPro" id="IPR035990">
    <property type="entry name" value="TIM_sf"/>
</dbReference>
<dbReference type="InterPro" id="IPR022896">
    <property type="entry name" value="TrioseP_Isoase_bac/euk"/>
</dbReference>
<dbReference type="InterPro" id="IPR000652">
    <property type="entry name" value="Triosephosphate_isomerase"/>
</dbReference>
<dbReference type="InterPro" id="IPR020861">
    <property type="entry name" value="Triosephosphate_isomerase_AS"/>
</dbReference>
<dbReference type="NCBIfam" id="TIGR00419">
    <property type="entry name" value="tim"/>
    <property type="match status" value="1"/>
</dbReference>
<dbReference type="PANTHER" id="PTHR21139">
    <property type="entry name" value="TRIOSEPHOSPHATE ISOMERASE"/>
    <property type="match status" value="1"/>
</dbReference>
<dbReference type="PANTHER" id="PTHR21139:SF42">
    <property type="entry name" value="TRIOSEPHOSPHATE ISOMERASE"/>
    <property type="match status" value="1"/>
</dbReference>
<dbReference type="Pfam" id="PF00121">
    <property type="entry name" value="TIM"/>
    <property type="match status" value="1"/>
</dbReference>
<dbReference type="SUPFAM" id="SSF51351">
    <property type="entry name" value="Triosephosphate isomerase (TIM)"/>
    <property type="match status" value="1"/>
</dbReference>
<dbReference type="PROSITE" id="PS00171">
    <property type="entry name" value="TIM_1"/>
    <property type="match status" value="1"/>
</dbReference>
<dbReference type="PROSITE" id="PS51440">
    <property type="entry name" value="TIM_2"/>
    <property type="match status" value="1"/>
</dbReference>
<organism>
    <name type="scientific">Shewanella sp. (strain MR-4)</name>
    <dbReference type="NCBI Taxonomy" id="60480"/>
    <lineage>
        <taxon>Bacteria</taxon>
        <taxon>Pseudomonadati</taxon>
        <taxon>Pseudomonadota</taxon>
        <taxon>Gammaproteobacteria</taxon>
        <taxon>Alteromonadales</taxon>
        <taxon>Shewanellaceae</taxon>
        <taxon>Shewanella</taxon>
    </lineage>
</organism>